<organism>
    <name type="scientific">Methanocaldococcus jannaschii (strain ATCC 43067 / DSM 2661 / JAL-1 / JCM 10045 / NBRC 100440)</name>
    <name type="common">Methanococcus jannaschii</name>
    <dbReference type="NCBI Taxonomy" id="243232"/>
    <lineage>
        <taxon>Archaea</taxon>
        <taxon>Methanobacteriati</taxon>
        <taxon>Methanobacteriota</taxon>
        <taxon>Methanomada group</taxon>
        <taxon>Methanococci</taxon>
        <taxon>Methanococcales</taxon>
        <taxon>Methanocaldococcaceae</taxon>
        <taxon>Methanocaldococcus</taxon>
    </lineage>
</organism>
<name>Y1110_METJA</name>
<keyword id="KW-1185">Reference proteome</keyword>
<accession>Q58510</accession>
<reference key="1">
    <citation type="journal article" date="1996" name="Science">
        <title>Complete genome sequence of the methanogenic archaeon, Methanococcus jannaschii.</title>
        <authorList>
            <person name="Bult C.J."/>
            <person name="White O."/>
            <person name="Olsen G.J."/>
            <person name="Zhou L."/>
            <person name="Fleischmann R.D."/>
            <person name="Sutton G.G."/>
            <person name="Blake J.A."/>
            <person name="FitzGerald L.M."/>
            <person name="Clayton R.A."/>
            <person name="Gocayne J.D."/>
            <person name="Kerlavage A.R."/>
            <person name="Dougherty B.A."/>
            <person name="Tomb J.-F."/>
            <person name="Adams M.D."/>
            <person name="Reich C.I."/>
            <person name="Overbeek R."/>
            <person name="Kirkness E.F."/>
            <person name="Weinstock K.G."/>
            <person name="Merrick J.M."/>
            <person name="Glodek A."/>
            <person name="Scott J.L."/>
            <person name="Geoghagen N.S.M."/>
            <person name="Weidman J.F."/>
            <person name="Fuhrmann J.L."/>
            <person name="Nguyen D."/>
            <person name="Utterback T.R."/>
            <person name="Kelley J.M."/>
            <person name="Peterson J.D."/>
            <person name="Sadow P.W."/>
            <person name="Hanna M.C."/>
            <person name="Cotton M.D."/>
            <person name="Roberts K.M."/>
            <person name="Hurst M.A."/>
            <person name="Kaine B.P."/>
            <person name="Borodovsky M."/>
            <person name="Klenk H.-P."/>
            <person name="Fraser C.M."/>
            <person name="Smith H.O."/>
            <person name="Woese C.R."/>
            <person name="Venter J.C."/>
        </authorList>
    </citation>
    <scope>NUCLEOTIDE SEQUENCE [LARGE SCALE GENOMIC DNA]</scope>
    <source>
        <strain>ATCC 43067 / DSM 2661 / JAL-1 / JCM 10045 / NBRC 100440</strain>
    </source>
</reference>
<sequence length="486" mass="56596">MESTSNLIKNANEFLDSLNEINDKLKEVVGKIKNKTIDKTKLSDIILTLEKNLEILQDLKSKMEFLEFDSPYKNVGKLKGGYDSEGLQEIASYSTYLRRIASEKKGILERVRHALVAHKIALAHLTEDIGNINLPPNLPLDGSYKKIMFEFPPYLVTTYKEFLDILEPKGRGILTSYTISLIVIDKGKREFKRIKVEDKNYEKYIKEKFGNAIITSIKRNFSKNKIIDDQYVRRVLAIGYLNTYKDEIEKAINEKIDKLLNEEEKKYLNRYLELCLLFREEADISGGILDVRCMEERKLKELELKEILEKEGLYRDGEPIEPLKKAIKIKNELSKKISKDILIKRFSEDVFKFYLYKTPDERARSNLFPSIMITPQRGFLSWMSVDGINCVDVLDLKFKLEEELPKYQIPLKNIGGVALYLIHDWDAVERFNFKKKDIEDLLKKIALIEPIKEILKDKNVDVSKLEKFGKVKKEKTKKFLDLLSGL</sequence>
<protein>
    <recommendedName>
        <fullName>Uncharacterized protein MJ1110</fullName>
    </recommendedName>
</protein>
<proteinExistence type="predicted"/>
<feature type="chain" id="PRO_0000107172" description="Uncharacterized protein MJ1110">
    <location>
        <begin position="1"/>
        <end position="486"/>
    </location>
</feature>
<gene>
    <name type="ordered locus">MJ1110</name>
</gene>
<dbReference type="EMBL" id="L77117">
    <property type="protein sequence ID" value="AAB99113.1"/>
    <property type="molecule type" value="Genomic_DNA"/>
</dbReference>
<dbReference type="PIR" id="E64438">
    <property type="entry name" value="E64438"/>
</dbReference>
<dbReference type="RefSeq" id="WP_010870622.1">
    <property type="nucleotide sequence ID" value="NC_000909.1"/>
</dbReference>
<dbReference type="SMR" id="Q58510"/>
<dbReference type="STRING" id="243232.MJ_1110"/>
<dbReference type="PaxDb" id="243232-MJ_1110"/>
<dbReference type="EnsemblBacteria" id="AAB99113">
    <property type="protein sequence ID" value="AAB99113"/>
    <property type="gene ID" value="MJ_1110"/>
</dbReference>
<dbReference type="GeneID" id="1452007"/>
<dbReference type="KEGG" id="mja:MJ_1110"/>
<dbReference type="eggNOG" id="arCOG03198">
    <property type="taxonomic scope" value="Archaea"/>
</dbReference>
<dbReference type="HOGENOM" id="CLU_565769_0_0_2"/>
<dbReference type="InParanoid" id="Q58510"/>
<dbReference type="OrthoDB" id="85577at2157"/>
<dbReference type="PhylomeDB" id="Q58510"/>
<dbReference type="Proteomes" id="UP000000805">
    <property type="component" value="Chromosome"/>
</dbReference>
<dbReference type="InterPro" id="IPR007503">
    <property type="entry name" value="DUF530"/>
</dbReference>
<dbReference type="Pfam" id="PF04409">
    <property type="entry name" value="DUF530"/>
    <property type="match status" value="2"/>
</dbReference>